<name>PYRB_CLOBB</name>
<dbReference type="EC" id="2.1.3.2" evidence="1"/>
<dbReference type="EMBL" id="CP001056">
    <property type="protein sequence ID" value="ACD24851.1"/>
    <property type="molecule type" value="Genomic_DNA"/>
</dbReference>
<dbReference type="SMR" id="B2TNG3"/>
<dbReference type="KEGG" id="cbk:CLL_A2581"/>
<dbReference type="PATRIC" id="fig|935198.13.peg.2536"/>
<dbReference type="HOGENOM" id="CLU_043846_1_2_9"/>
<dbReference type="UniPathway" id="UPA00070">
    <property type="reaction ID" value="UER00116"/>
</dbReference>
<dbReference type="Proteomes" id="UP000001195">
    <property type="component" value="Chromosome"/>
</dbReference>
<dbReference type="GO" id="GO:0016597">
    <property type="term" value="F:amino acid binding"/>
    <property type="evidence" value="ECO:0007669"/>
    <property type="project" value="InterPro"/>
</dbReference>
<dbReference type="GO" id="GO:0004070">
    <property type="term" value="F:aspartate carbamoyltransferase activity"/>
    <property type="evidence" value="ECO:0007669"/>
    <property type="project" value="UniProtKB-UniRule"/>
</dbReference>
<dbReference type="GO" id="GO:0006207">
    <property type="term" value="P:'de novo' pyrimidine nucleobase biosynthetic process"/>
    <property type="evidence" value="ECO:0007669"/>
    <property type="project" value="InterPro"/>
</dbReference>
<dbReference type="GO" id="GO:0044205">
    <property type="term" value="P:'de novo' UMP biosynthetic process"/>
    <property type="evidence" value="ECO:0007669"/>
    <property type="project" value="UniProtKB-UniRule"/>
</dbReference>
<dbReference type="GO" id="GO:0006520">
    <property type="term" value="P:amino acid metabolic process"/>
    <property type="evidence" value="ECO:0007669"/>
    <property type="project" value="InterPro"/>
</dbReference>
<dbReference type="FunFam" id="3.40.50.1370:FF:000002">
    <property type="entry name" value="Aspartate carbamoyltransferase 2"/>
    <property type="match status" value="1"/>
</dbReference>
<dbReference type="Gene3D" id="3.40.50.1370">
    <property type="entry name" value="Aspartate/ornithine carbamoyltransferase"/>
    <property type="match status" value="2"/>
</dbReference>
<dbReference type="HAMAP" id="MF_00001">
    <property type="entry name" value="Asp_carb_tr"/>
    <property type="match status" value="1"/>
</dbReference>
<dbReference type="InterPro" id="IPR006132">
    <property type="entry name" value="Asp/Orn_carbamoyltranf_P-bd"/>
</dbReference>
<dbReference type="InterPro" id="IPR006130">
    <property type="entry name" value="Asp/Orn_carbamoylTrfase"/>
</dbReference>
<dbReference type="InterPro" id="IPR036901">
    <property type="entry name" value="Asp/Orn_carbamoylTrfase_sf"/>
</dbReference>
<dbReference type="InterPro" id="IPR002082">
    <property type="entry name" value="Asp_carbamoyltransf"/>
</dbReference>
<dbReference type="InterPro" id="IPR006131">
    <property type="entry name" value="Asp_carbamoyltransf_Asp/Orn-bd"/>
</dbReference>
<dbReference type="NCBIfam" id="TIGR00670">
    <property type="entry name" value="asp_carb_tr"/>
    <property type="match status" value="1"/>
</dbReference>
<dbReference type="NCBIfam" id="NF002032">
    <property type="entry name" value="PRK00856.1"/>
    <property type="match status" value="1"/>
</dbReference>
<dbReference type="PANTHER" id="PTHR45753:SF6">
    <property type="entry name" value="ASPARTATE CARBAMOYLTRANSFERASE"/>
    <property type="match status" value="1"/>
</dbReference>
<dbReference type="PANTHER" id="PTHR45753">
    <property type="entry name" value="ORNITHINE CARBAMOYLTRANSFERASE, MITOCHONDRIAL"/>
    <property type="match status" value="1"/>
</dbReference>
<dbReference type="Pfam" id="PF00185">
    <property type="entry name" value="OTCace"/>
    <property type="match status" value="1"/>
</dbReference>
<dbReference type="Pfam" id="PF02729">
    <property type="entry name" value="OTCace_N"/>
    <property type="match status" value="1"/>
</dbReference>
<dbReference type="PRINTS" id="PR00100">
    <property type="entry name" value="AOTCASE"/>
</dbReference>
<dbReference type="PRINTS" id="PR00101">
    <property type="entry name" value="ATCASE"/>
</dbReference>
<dbReference type="SUPFAM" id="SSF53671">
    <property type="entry name" value="Aspartate/ornithine carbamoyltransferase"/>
    <property type="match status" value="1"/>
</dbReference>
<dbReference type="PROSITE" id="PS00097">
    <property type="entry name" value="CARBAMOYLTRANSFERASE"/>
    <property type="match status" value="1"/>
</dbReference>
<evidence type="ECO:0000255" key="1">
    <source>
        <dbReference type="HAMAP-Rule" id="MF_00001"/>
    </source>
</evidence>
<organism>
    <name type="scientific">Clostridium botulinum (strain Eklund 17B / Type B)</name>
    <dbReference type="NCBI Taxonomy" id="935198"/>
    <lineage>
        <taxon>Bacteria</taxon>
        <taxon>Bacillati</taxon>
        <taxon>Bacillota</taxon>
        <taxon>Clostridia</taxon>
        <taxon>Eubacteriales</taxon>
        <taxon>Clostridiaceae</taxon>
        <taxon>Clostridium</taxon>
    </lineage>
</organism>
<gene>
    <name evidence="1" type="primary">pyrB</name>
    <name type="ordered locus">CLL_A2581</name>
</gene>
<protein>
    <recommendedName>
        <fullName evidence="1">Aspartate carbamoyltransferase catalytic subunit</fullName>
        <ecNumber evidence="1">2.1.3.2</ecNumber>
    </recommendedName>
    <alternativeName>
        <fullName evidence="1">Aspartate transcarbamylase</fullName>
        <shortName evidence="1">ATCase</shortName>
    </alternativeName>
</protein>
<keyword id="KW-0665">Pyrimidine biosynthesis</keyword>
<keyword id="KW-0808">Transferase</keyword>
<feature type="chain" id="PRO_1000088750" description="Aspartate carbamoyltransferase catalytic subunit">
    <location>
        <begin position="1"/>
        <end position="307"/>
    </location>
</feature>
<feature type="binding site" evidence="1">
    <location>
        <position position="54"/>
    </location>
    <ligand>
        <name>carbamoyl phosphate</name>
        <dbReference type="ChEBI" id="CHEBI:58228"/>
    </ligand>
</feature>
<feature type="binding site" evidence="1">
    <location>
        <position position="55"/>
    </location>
    <ligand>
        <name>carbamoyl phosphate</name>
        <dbReference type="ChEBI" id="CHEBI:58228"/>
    </ligand>
</feature>
<feature type="binding site" evidence="1">
    <location>
        <position position="83"/>
    </location>
    <ligand>
        <name>L-aspartate</name>
        <dbReference type="ChEBI" id="CHEBI:29991"/>
    </ligand>
</feature>
<feature type="binding site" evidence="1">
    <location>
        <position position="104"/>
    </location>
    <ligand>
        <name>carbamoyl phosphate</name>
        <dbReference type="ChEBI" id="CHEBI:58228"/>
    </ligand>
</feature>
<feature type="binding site" evidence="1">
    <location>
        <position position="132"/>
    </location>
    <ligand>
        <name>carbamoyl phosphate</name>
        <dbReference type="ChEBI" id="CHEBI:58228"/>
    </ligand>
</feature>
<feature type="binding site" evidence="1">
    <location>
        <position position="135"/>
    </location>
    <ligand>
        <name>carbamoyl phosphate</name>
        <dbReference type="ChEBI" id="CHEBI:58228"/>
    </ligand>
</feature>
<feature type="binding site" evidence="1">
    <location>
        <position position="165"/>
    </location>
    <ligand>
        <name>L-aspartate</name>
        <dbReference type="ChEBI" id="CHEBI:29991"/>
    </ligand>
</feature>
<feature type="binding site" evidence="1">
    <location>
        <position position="228"/>
    </location>
    <ligand>
        <name>L-aspartate</name>
        <dbReference type="ChEBI" id="CHEBI:29991"/>
    </ligand>
</feature>
<feature type="binding site" evidence="1">
    <location>
        <position position="267"/>
    </location>
    <ligand>
        <name>carbamoyl phosphate</name>
        <dbReference type="ChEBI" id="CHEBI:58228"/>
    </ligand>
</feature>
<feature type="binding site" evidence="1">
    <location>
        <position position="268"/>
    </location>
    <ligand>
        <name>carbamoyl phosphate</name>
        <dbReference type="ChEBI" id="CHEBI:58228"/>
    </ligand>
</feature>
<reference key="1">
    <citation type="submission" date="2008-04" db="EMBL/GenBank/DDBJ databases">
        <title>Complete sequence of Clostridium botulinum strain Eklund.</title>
        <authorList>
            <person name="Brinkac L.M."/>
            <person name="Brown J.L."/>
            <person name="Bruce D."/>
            <person name="Detter C."/>
            <person name="Munk C."/>
            <person name="Smith L.A."/>
            <person name="Smith T.J."/>
            <person name="Sutton G."/>
            <person name="Brettin T.S."/>
        </authorList>
    </citation>
    <scope>NUCLEOTIDE SEQUENCE [LARGE SCALE GENOMIC DNA]</scope>
    <source>
        <strain>Eklund 17B / Type B</strain>
    </source>
</reference>
<comment type="function">
    <text evidence="1">Catalyzes the condensation of carbamoyl phosphate and aspartate to form carbamoyl aspartate and inorganic phosphate, the committed step in the de novo pyrimidine nucleotide biosynthesis pathway.</text>
</comment>
<comment type="catalytic activity">
    <reaction evidence="1">
        <text>carbamoyl phosphate + L-aspartate = N-carbamoyl-L-aspartate + phosphate + H(+)</text>
        <dbReference type="Rhea" id="RHEA:20013"/>
        <dbReference type="ChEBI" id="CHEBI:15378"/>
        <dbReference type="ChEBI" id="CHEBI:29991"/>
        <dbReference type="ChEBI" id="CHEBI:32814"/>
        <dbReference type="ChEBI" id="CHEBI:43474"/>
        <dbReference type="ChEBI" id="CHEBI:58228"/>
        <dbReference type="EC" id="2.1.3.2"/>
    </reaction>
</comment>
<comment type="pathway">
    <text evidence="1">Pyrimidine metabolism; UMP biosynthesis via de novo pathway; (S)-dihydroorotate from bicarbonate: step 2/3.</text>
</comment>
<comment type="subunit">
    <text evidence="1">Heterododecamer (2C3:3R2) of six catalytic PyrB chains organized as two trimers (C3), and six regulatory PyrI chains organized as three dimers (R2).</text>
</comment>
<comment type="similarity">
    <text evidence="1">Belongs to the aspartate/ornithine carbamoyltransferase superfamily. ATCase family.</text>
</comment>
<accession>B2TNG3</accession>
<sequence length="307" mass="35157">MIKDKHLIDPMDFTVEELEEIFKLAHEIILDPEKFSHVCEGKILGTLFYEPSTRTRFSFEAAMMRLGGKILGFSEPNSSSASKGESLSDTIKMVSIYTDIIAMRHPKEGSAKVASLYSSVPIINAGDGGHQHPTQTLTDLLTIEMLKDGLSNHTIGICGDLKYGRTVHSLIKAMSRYKGNKFLLISPKELRIPDYIREEILRKNNIEFLEVETLEEVIDKVDILYMTRIQKERFFNEEEYLRLRDSYILNKEKMNLAKSDMIVMHPLPRVNEIACEVDYDKRAAYFKQAEYGMYARMALMAKLLGVL</sequence>
<proteinExistence type="inferred from homology"/>